<organism>
    <name type="scientific">Neisseria gonorrhoeae</name>
    <dbReference type="NCBI Taxonomy" id="485"/>
    <lineage>
        <taxon>Bacteria</taxon>
        <taxon>Pseudomonadati</taxon>
        <taxon>Pseudomonadota</taxon>
        <taxon>Betaproteobacteria</taxon>
        <taxon>Neisseriales</taxon>
        <taxon>Neisseriaceae</taxon>
        <taxon>Neisseria</taxon>
    </lineage>
</organism>
<dbReference type="EC" id="1.7.2.1"/>
<dbReference type="EMBL" id="M97926">
    <property type="protein sequence ID" value="AAA25462.1"/>
    <property type="molecule type" value="Genomic_DNA"/>
</dbReference>
<dbReference type="PIR" id="A49208">
    <property type="entry name" value="A49208"/>
</dbReference>
<dbReference type="PDB" id="1KBV">
    <property type="method" value="X-ray"/>
    <property type="resolution" value="1.95 A"/>
    <property type="chains" value="A/B/C/D/E/F=42-364"/>
</dbReference>
<dbReference type="PDB" id="1KBW">
    <property type="method" value="X-ray"/>
    <property type="resolution" value="2.40 A"/>
    <property type="chains" value="A/B/C/D/E/F=42-364"/>
</dbReference>
<dbReference type="PDBsum" id="1KBV"/>
<dbReference type="PDBsum" id="1KBW"/>
<dbReference type="SMR" id="Q02219"/>
<dbReference type="PATRIC" id="fig|485.42.peg.2461"/>
<dbReference type="EvolutionaryTrace" id="Q02219"/>
<dbReference type="GO" id="GO:0009279">
    <property type="term" value="C:cell outer membrane"/>
    <property type="evidence" value="ECO:0007669"/>
    <property type="project" value="UniProtKB-SubCell"/>
</dbReference>
<dbReference type="GO" id="GO:0005507">
    <property type="term" value="F:copper ion binding"/>
    <property type="evidence" value="ECO:0007669"/>
    <property type="project" value="InterPro"/>
</dbReference>
<dbReference type="GO" id="GO:0050421">
    <property type="term" value="F:nitrite reductase (NO-forming) activity"/>
    <property type="evidence" value="ECO:0007669"/>
    <property type="project" value="UniProtKB-EC"/>
</dbReference>
<dbReference type="CDD" id="cd04201">
    <property type="entry name" value="CuRO_1_CuNIR_like"/>
    <property type="match status" value="1"/>
</dbReference>
<dbReference type="CDD" id="cd04208">
    <property type="entry name" value="CuRO_2_CuNIR"/>
    <property type="match status" value="1"/>
</dbReference>
<dbReference type="FunFam" id="2.60.40.420:FF:000091">
    <property type="entry name" value="Copper-containing nitrite reductase"/>
    <property type="match status" value="1"/>
</dbReference>
<dbReference type="Gene3D" id="2.60.40.420">
    <property type="entry name" value="Cupredoxins - blue copper proteins"/>
    <property type="match status" value="1"/>
</dbReference>
<dbReference type="InterPro" id="IPR011707">
    <property type="entry name" value="Cu-oxidase-like_N"/>
</dbReference>
<dbReference type="InterPro" id="IPR045087">
    <property type="entry name" value="Cu-oxidase_fam"/>
</dbReference>
<dbReference type="InterPro" id="IPR008972">
    <property type="entry name" value="Cupredoxin"/>
</dbReference>
<dbReference type="InterPro" id="IPR001287">
    <property type="entry name" value="NO2-reductase_Cu"/>
</dbReference>
<dbReference type="NCBIfam" id="TIGR02376">
    <property type="entry name" value="Cu_nitrite_red"/>
    <property type="match status" value="1"/>
</dbReference>
<dbReference type="PANTHER" id="PTHR11709:SF394">
    <property type="entry name" value="FI03373P-RELATED"/>
    <property type="match status" value="1"/>
</dbReference>
<dbReference type="PANTHER" id="PTHR11709">
    <property type="entry name" value="MULTI-COPPER OXIDASE"/>
    <property type="match status" value="1"/>
</dbReference>
<dbReference type="Pfam" id="PF07732">
    <property type="entry name" value="Cu-oxidase_3"/>
    <property type="match status" value="1"/>
</dbReference>
<dbReference type="PRINTS" id="PR00695">
    <property type="entry name" value="CUNO2RDTASE"/>
</dbReference>
<dbReference type="SUPFAM" id="SSF49503">
    <property type="entry name" value="Cupredoxins"/>
    <property type="match status" value="2"/>
</dbReference>
<dbReference type="PROSITE" id="PS51257">
    <property type="entry name" value="PROKAR_LIPOPROTEIN"/>
    <property type="match status" value="1"/>
</dbReference>
<accession>Q02219</accession>
<sequence>MKRQALAAMIASLFALAACGGEQAAQAPAETPAASAEAASSAAQATAETPAGELPVIDAVTTHAPEVPPAIDRDYPAKVRVKMETVEKTMKMDDGVEYRYWTFDGDVPGRMIRVREGDTVEVEFSNNPSSTVPHNVDFHAATGQGGGAAATFTAPGRTSTFSFKALQPGLYIYHCAVAPVGMHIANGMYGLILVEPKEGLPKVDKEFYIVQGDFYTKGKKGAQGLQPFDMDKAVAEQPEYVVFNGHVGSIAGDNALKAKAGETVRMYVGNGGPNLVSSFHVIGEIFDKVYVEGGKLINENVQSTIVPAGGSAIVEFKVDIPGSYTLVDHSIFRAFNKGALGQLKVEGAENPEIMTQKLSDTAYAGSGAASAPAASAPAASAPAASASEKSVY</sequence>
<keyword id="KW-0002">3D-structure</keyword>
<keyword id="KW-0998">Cell outer membrane</keyword>
<keyword id="KW-0186">Copper</keyword>
<keyword id="KW-0449">Lipoprotein</keyword>
<keyword id="KW-0472">Membrane</keyword>
<keyword id="KW-0479">Metal-binding</keyword>
<keyword id="KW-0560">Oxidoreductase</keyword>
<keyword id="KW-0564">Palmitate</keyword>
<keyword id="KW-0677">Repeat</keyword>
<keyword id="KW-0732">Signal</keyword>
<feature type="signal peptide" evidence="7">
    <location>
        <begin position="1"/>
        <end position="18"/>
    </location>
</feature>
<feature type="chain" id="PRO_0000002997" description="Copper-containing nitrite reductase">
    <location>
        <begin position="19"/>
        <end position="392"/>
    </location>
</feature>
<feature type="domain" description="Plastocyanin-like 1">
    <location>
        <begin position="101"/>
        <end position="195"/>
    </location>
</feature>
<feature type="domain" description="Plastocyanin-like 2">
    <location>
        <begin position="245"/>
        <end position="346"/>
    </location>
</feature>
<feature type="repeat" description="1">
    <location>
        <begin position="368"/>
        <end position="372"/>
    </location>
</feature>
<feature type="repeat" description="2">
    <location>
        <begin position="373"/>
        <end position="377"/>
    </location>
</feature>
<feature type="repeat" description="3">
    <location>
        <begin position="378"/>
        <end position="382"/>
    </location>
</feature>
<feature type="repeat" description="4">
    <location>
        <begin position="383"/>
        <end position="387"/>
    </location>
</feature>
<feature type="region of interest" description="Disordered" evidence="1">
    <location>
        <begin position="30"/>
        <end position="49"/>
    </location>
</feature>
<feature type="region of interest" description="Disordered" evidence="1">
    <location>
        <begin position="367"/>
        <end position="392"/>
    </location>
</feature>
<feature type="region of interest" description="4 X 5 AA tandem repeats of A-A-S-A-P">
    <location>
        <begin position="368"/>
        <end position="387"/>
    </location>
</feature>
<feature type="binding site" description="type 1 copper site">
    <location>
        <position position="134"/>
    </location>
    <ligand>
        <name>Cu cation</name>
        <dbReference type="ChEBI" id="CHEBI:23378"/>
        <label>1</label>
    </ligand>
</feature>
<feature type="binding site" description="type 2 copper site">
    <location>
        <position position="139"/>
    </location>
    <ligand>
        <name>Cu cation</name>
        <dbReference type="ChEBI" id="CHEBI:23378"/>
        <label>2</label>
    </ligand>
</feature>
<feature type="binding site" evidence="2">
    <location>
        <position position="139"/>
    </location>
    <ligand>
        <name>substrate</name>
    </ligand>
</feature>
<feature type="binding site" description="type 2 copper site">
    <location>
        <position position="174"/>
    </location>
    <ligand>
        <name>Cu cation</name>
        <dbReference type="ChEBI" id="CHEBI:23378"/>
        <label>2</label>
    </ligand>
</feature>
<feature type="binding site" description="type 1 copper site">
    <location>
        <position position="175"/>
    </location>
    <ligand>
        <name>Cu cation</name>
        <dbReference type="ChEBI" id="CHEBI:23378"/>
        <label>1</label>
    </ligand>
</feature>
<feature type="binding site" description="type 1 copper site">
    <location>
        <position position="183"/>
    </location>
    <ligand>
        <name>Cu cation</name>
        <dbReference type="ChEBI" id="CHEBI:23378"/>
        <label>1</label>
    </ligand>
</feature>
<feature type="binding site" description="type 1 copper site">
    <location>
        <position position="188"/>
    </location>
    <ligand>
        <name>Cu cation</name>
        <dbReference type="ChEBI" id="CHEBI:23378"/>
        <label>1</label>
    </ligand>
</feature>
<feature type="binding site" evidence="2">
    <location>
        <position position="280"/>
    </location>
    <ligand>
        <name>substrate</name>
    </ligand>
</feature>
<feature type="binding site" description="type 2 copper site">
    <location>
        <position position="329"/>
    </location>
    <ligand>
        <name>Cu cation</name>
        <dbReference type="ChEBI" id="CHEBI:23378"/>
        <label>2</label>
    </ligand>
</feature>
<feature type="lipid moiety-binding region" description="N-palmitoyl cysteine" evidence="8">
    <location>
        <position position="19"/>
    </location>
</feature>
<feature type="lipid moiety-binding region" description="S-diacylglycerol cysteine" evidence="8">
    <location>
        <position position="19"/>
    </location>
</feature>
<feature type="strand" evidence="9">
    <location>
        <begin position="56"/>
        <end position="58"/>
    </location>
</feature>
<feature type="strand" evidence="9">
    <location>
        <begin position="78"/>
        <end position="93"/>
    </location>
</feature>
<feature type="strand" evidence="9">
    <location>
        <begin position="96"/>
        <end position="103"/>
    </location>
</feature>
<feature type="strand" evidence="9">
    <location>
        <begin position="106"/>
        <end position="108"/>
    </location>
</feature>
<feature type="strand" evidence="9">
    <location>
        <begin position="111"/>
        <end position="115"/>
    </location>
</feature>
<feature type="strand" evidence="9">
    <location>
        <begin position="119"/>
        <end position="126"/>
    </location>
</feature>
<feature type="helix" evidence="9">
    <location>
        <begin position="144"/>
        <end position="147"/>
    </location>
</feature>
<feature type="turn" evidence="9">
    <location>
        <begin position="148"/>
        <end position="151"/>
    </location>
</feature>
<feature type="strand" evidence="9">
    <location>
        <begin position="157"/>
        <end position="164"/>
    </location>
</feature>
<feature type="strand" evidence="9">
    <location>
        <begin position="169"/>
        <end position="174"/>
    </location>
</feature>
<feature type="helix" evidence="9">
    <location>
        <begin position="180"/>
        <end position="185"/>
    </location>
</feature>
<feature type="strand" evidence="9">
    <location>
        <begin position="189"/>
        <end position="195"/>
    </location>
</feature>
<feature type="strand" evidence="9">
    <location>
        <begin position="204"/>
        <end position="214"/>
    </location>
</feature>
<feature type="strand" evidence="9">
    <location>
        <begin position="216"/>
        <end position="218"/>
    </location>
</feature>
<feature type="strand" evidence="9">
    <location>
        <begin position="224"/>
        <end position="226"/>
    </location>
</feature>
<feature type="helix" evidence="9">
    <location>
        <begin position="230"/>
        <end position="235"/>
    </location>
</feature>
<feature type="strand" evidence="9">
    <location>
        <begin position="239"/>
        <end position="243"/>
    </location>
</feature>
<feature type="turn" evidence="9">
    <location>
        <begin position="247"/>
        <end position="250"/>
    </location>
</feature>
<feature type="helix" evidence="9">
    <location>
        <begin position="252"/>
        <end position="254"/>
    </location>
</feature>
<feature type="strand" evidence="9">
    <location>
        <begin position="256"/>
        <end position="259"/>
    </location>
</feature>
<feature type="strand" evidence="9">
    <location>
        <begin position="262"/>
        <end position="274"/>
    </location>
</feature>
<feature type="strand" evidence="9">
    <location>
        <begin position="277"/>
        <end position="282"/>
    </location>
</feature>
<feature type="strand" evidence="9">
    <location>
        <begin position="286"/>
        <end position="290"/>
    </location>
</feature>
<feature type="helix" evidence="9">
    <location>
        <begin position="291"/>
        <end position="293"/>
    </location>
</feature>
<feature type="strand" evidence="9">
    <location>
        <begin position="300"/>
        <end position="306"/>
    </location>
</feature>
<feature type="strand" evidence="9">
    <location>
        <begin position="310"/>
        <end position="318"/>
    </location>
</feature>
<feature type="strand" evidence="9">
    <location>
        <begin position="322"/>
        <end position="330"/>
    </location>
</feature>
<feature type="helix" evidence="9">
    <location>
        <begin position="332"/>
        <end position="336"/>
    </location>
</feature>
<feature type="strand" evidence="9">
    <location>
        <begin position="340"/>
        <end position="347"/>
    </location>
</feature>
<feature type="turn" evidence="9">
    <location>
        <begin position="351"/>
        <end position="353"/>
    </location>
</feature>
<reference key="1">
    <citation type="journal article" date="1992" name="Infect. Immun.">
        <title>Isolation and nucleotide sequence of the gene (aniA) encoding the major anaerobically induced outer membrane protein of Neisseria gonorrhoeae.</title>
        <authorList>
            <person name="Hoehn G.T."/>
            <person name="Clark V.L."/>
        </authorList>
    </citation>
    <scope>NUCLEOTIDE SEQUENCE [GENOMIC DNA]</scope>
    <scope>INDUCTION</scope>
    <source>
        <strain>R10</strain>
    </source>
</reference>
<reference key="2">
    <citation type="journal article" date="1992" name="Infect. Immun.">
        <title>The major anaerobically induced outer membrane protein of Neisseria gonorrhoeae, Pan 1, is a lipoprotein.</title>
        <authorList>
            <person name="Hoehn G.T."/>
            <person name="Clark V.L."/>
        </authorList>
    </citation>
    <scope>PALMITOYLATION AT CYS-19</scope>
    <scope>DIACYLGLYCEROL AT CYS-19</scope>
    <source>
        <strain>ATCC 33084 / F62 / M-1914</strain>
    </source>
</reference>
<reference key="3">
    <citation type="journal article" date="1997" name="Mol. Gen. Genet.">
        <title>The Neisseria gonorrhoeae gene aniA encodes an inducible nitrite reductase.</title>
        <authorList>
            <person name="Mellies J."/>
            <person name="Jose J."/>
            <person name="Meyer T.F."/>
        </authorList>
    </citation>
    <scope>FUNCTION</scope>
    <scope>INDUCTION</scope>
    <source>
        <strain>MS11</strain>
    </source>
</reference>
<reference key="4">
    <citation type="journal article" date="1999" name="J. Bacteriol.">
        <title>cis- and trans-acting elements involved in regulation of aniA, the gene encoding the major anaerobically induced outer membrane protein in Neisseria gonorrhoeae.</title>
        <authorList>
            <person name="Householder T.C."/>
            <person name="Belli W.A."/>
            <person name="Lissenden S."/>
            <person name="Cole J.A."/>
            <person name="Clark V.L."/>
        </authorList>
    </citation>
    <scope>TRANSCRIPTIONAL REGULATION BY FNR AND NARP</scope>
    <source>
        <strain>ATCC 33084 / F62 / M-1914</strain>
    </source>
</reference>
<reference key="5">
    <citation type="journal article" date="2000" name="Infect. Immun.">
        <title>Expression of AniA, the major anaerobically induced outer membrane protein of Neisseria gonorrhoeae, provides protection against killing by normal human sera.</title>
        <authorList>
            <person name="Cardinale J.A."/>
            <person name="Clark V.L."/>
        </authorList>
    </citation>
    <scope>PROTECTION AGAINST KILLING BY HUMAN SERA</scope>
    <source>
        <strain>ATCC 33084 / F62 / M-1914</strain>
    </source>
</reference>
<reference key="6">
    <citation type="journal article" date="2002" name="J. Mol. Biol.">
        <title>Crystal structure of the soluble domain of the major anaerobically induced outer membrane protein (AniA) from pathogenic Neisseria: a new class of copper-containing nitrite reductases.</title>
        <authorList>
            <person name="Boulanger M.J."/>
            <person name="Murphy M.E.P."/>
        </authorList>
    </citation>
    <scope>X-RAY CRYSTALLOGRAPHY (1.95 ANGSTROMS) OF 42-364 IN COMPLEX WITH SUBSTRATE AND COPPER IONS</scope>
    <scope>SUBUNIT</scope>
</reference>
<evidence type="ECO:0000256" key="1">
    <source>
        <dbReference type="SAM" id="MobiDB-lite"/>
    </source>
</evidence>
<evidence type="ECO:0000269" key="2">
    <source>
    </source>
</evidence>
<evidence type="ECO:0000269" key="3">
    <source>
    </source>
</evidence>
<evidence type="ECO:0000269" key="4">
    <source>
    </source>
</evidence>
<evidence type="ECO:0000269" key="5">
    <source>
    </source>
</evidence>
<evidence type="ECO:0000269" key="6">
    <source>
    </source>
</evidence>
<evidence type="ECO:0000305" key="7"/>
<evidence type="ECO:0000305" key="8">
    <source>
    </source>
</evidence>
<evidence type="ECO:0007829" key="9">
    <source>
        <dbReference type="PDB" id="1KBV"/>
    </source>
</evidence>
<proteinExistence type="evidence at protein level"/>
<name>ANIA_NEIGO</name>
<gene>
    <name type="primary">aniA</name>
</gene>
<comment type="function">
    <text evidence="5">Catalyzes the reduction of nitrite to nitric oxide (NO), probably with azurin as electron donor. Essential for growth and survival in oxygen-depleted environments. Can also provide protection against killing by normal human sera.</text>
</comment>
<comment type="catalytic activity">
    <reaction>
        <text>nitric oxide + Fe(III)-[cytochrome c] + H2O = Fe(II)-[cytochrome c] + nitrite + 2 H(+)</text>
        <dbReference type="Rhea" id="RHEA:15233"/>
        <dbReference type="Rhea" id="RHEA-COMP:10350"/>
        <dbReference type="Rhea" id="RHEA-COMP:14399"/>
        <dbReference type="ChEBI" id="CHEBI:15377"/>
        <dbReference type="ChEBI" id="CHEBI:15378"/>
        <dbReference type="ChEBI" id="CHEBI:16301"/>
        <dbReference type="ChEBI" id="CHEBI:16480"/>
        <dbReference type="ChEBI" id="CHEBI:29033"/>
        <dbReference type="ChEBI" id="CHEBI:29034"/>
        <dbReference type="EC" id="1.7.2.1"/>
    </reaction>
</comment>
<comment type="cofactor">
    <cofactor>
        <name>Cu(+)</name>
        <dbReference type="ChEBI" id="CHEBI:49552"/>
    </cofactor>
    <text>Binds 1 Cu(+) ion.</text>
</comment>
<comment type="cofactor">
    <cofactor>
        <name>Cu(2+)</name>
        <dbReference type="ChEBI" id="CHEBI:29036"/>
    </cofactor>
    <text>Binds 1 Cu(2+) ion.</text>
</comment>
<comment type="subunit">
    <text evidence="2">Homotrimer.</text>
</comment>
<comment type="subcellular location">
    <subcellularLocation>
        <location evidence="7">Cell outer membrane</location>
        <topology evidence="7">Lipid-anchor</topology>
    </subcellularLocation>
</comment>
<comment type="induction">
    <text evidence="3 5 6">By anaerobic and microaerophilic conditions in the presence of nitrite. Regulated by the gonococcal fnr and NarP homologs.</text>
</comment>
<comment type="PTM">
    <text evidence="4">Palmitoylated.</text>
</comment>
<comment type="miscellaneous">
    <text>Undetected during aerobic growth.</text>
</comment>
<comment type="similarity">
    <text evidence="7">Belongs to the multicopper oxidase family.</text>
</comment>
<protein>
    <recommendedName>
        <fullName>Copper-containing nitrite reductase</fullName>
        <ecNumber>1.7.2.1</ecNumber>
    </recommendedName>
    <alternativeName>
        <fullName>Major outer membrane protein Pan 1</fullName>
    </alternativeName>
</protein>